<dbReference type="EC" id="2.3.1.204" evidence="1"/>
<dbReference type="EMBL" id="CP000253">
    <property type="protein sequence ID" value="ABD29718.1"/>
    <property type="status" value="ALT_INIT"/>
    <property type="molecule type" value="Genomic_DNA"/>
</dbReference>
<dbReference type="RefSeq" id="WP_000362357.1">
    <property type="nucleotide sequence ID" value="NZ_LS483365.1"/>
</dbReference>
<dbReference type="RefSeq" id="WP_001190417.1">
    <property type="nucleotide sequence ID" value="NC_007795.1"/>
</dbReference>
<dbReference type="RefSeq" id="YP_499143.1">
    <property type="nucleotide sequence ID" value="NC_007795.1"/>
</dbReference>
<dbReference type="SMR" id="Q2G0I9"/>
<dbReference type="STRING" id="93061.SAOUHSC_00575"/>
<dbReference type="PaxDb" id="1280-SAXN108_0645"/>
<dbReference type="GeneID" id="3920616"/>
<dbReference type="KEGG" id="sao:SAOUHSC_00575"/>
<dbReference type="PATRIC" id="fig|93061.5.peg.518"/>
<dbReference type="eggNOG" id="COG0095">
    <property type="taxonomic scope" value="Bacteria"/>
</dbReference>
<dbReference type="HOGENOM" id="CLU_067270_0_0_9"/>
<dbReference type="OrthoDB" id="2080934at2"/>
<dbReference type="Proteomes" id="UP000008816">
    <property type="component" value="Chromosome"/>
</dbReference>
<dbReference type="GO" id="GO:0033819">
    <property type="term" value="F:lipoyl(octanoyl) transferase activity"/>
    <property type="evidence" value="ECO:0007669"/>
    <property type="project" value="InterPro"/>
</dbReference>
<dbReference type="GO" id="GO:0009107">
    <property type="term" value="P:lipoate biosynthetic process"/>
    <property type="evidence" value="ECO:0007669"/>
    <property type="project" value="UniProtKB-UniRule"/>
</dbReference>
<dbReference type="GO" id="GO:0036211">
    <property type="term" value="P:protein modification process"/>
    <property type="evidence" value="ECO:0007669"/>
    <property type="project" value="InterPro"/>
</dbReference>
<dbReference type="CDD" id="cd16443">
    <property type="entry name" value="LplA"/>
    <property type="match status" value="1"/>
</dbReference>
<dbReference type="Gene3D" id="3.30.930.10">
    <property type="entry name" value="Bira Bifunctional Protein, Domain 2"/>
    <property type="match status" value="1"/>
</dbReference>
<dbReference type="HAMAP" id="MF_02119">
    <property type="entry name" value="LipL"/>
    <property type="match status" value="1"/>
</dbReference>
<dbReference type="InterPro" id="IPR045864">
    <property type="entry name" value="aa-tRNA-synth_II/BPL/LPL"/>
</dbReference>
<dbReference type="InterPro" id="IPR004143">
    <property type="entry name" value="BPL_LPL_catalytic"/>
</dbReference>
<dbReference type="InterPro" id="IPR024897">
    <property type="entry name" value="LipL"/>
</dbReference>
<dbReference type="InterPro" id="IPR050664">
    <property type="entry name" value="Octanoyltrans_LipM/LipL"/>
</dbReference>
<dbReference type="PANTHER" id="PTHR43679:SF2">
    <property type="entry name" value="OCTANOYL-[GCVH]:PROTEIN N-OCTANOYLTRANSFERASE"/>
    <property type="match status" value="1"/>
</dbReference>
<dbReference type="PANTHER" id="PTHR43679">
    <property type="entry name" value="OCTANOYLTRANSFERASE LIPM-RELATED"/>
    <property type="match status" value="1"/>
</dbReference>
<dbReference type="Pfam" id="PF21948">
    <property type="entry name" value="LplA-B_cat"/>
    <property type="match status" value="1"/>
</dbReference>
<dbReference type="SUPFAM" id="SSF55681">
    <property type="entry name" value="Class II aaRS and biotin synthetases"/>
    <property type="match status" value="1"/>
</dbReference>
<dbReference type="PROSITE" id="PS51733">
    <property type="entry name" value="BPL_LPL_CATALYTIC"/>
    <property type="match status" value="1"/>
</dbReference>
<proteinExistence type="inferred from homology"/>
<accession>Q2G0I9</accession>
<feature type="chain" id="PRO_0000410845" description="Octanoyl-[GcvH]:protein N-octanoyltransferase">
    <location>
        <begin position="1"/>
        <end position="278"/>
    </location>
</feature>
<feature type="domain" description="BPL/LPL catalytic" evidence="2">
    <location>
        <begin position="41"/>
        <end position="247"/>
    </location>
</feature>
<feature type="active site" description="Acyl-thioester intermediate" evidence="1">
    <location>
        <position position="146"/>
    </location>
</feature>
<feature type="site" description="Lowers pKa of active site Cys" evidence="1">
    <location>
        <position position="158"/>
    </location>
</feature>
<keyword id="KW-0012">Acyltransferase</keyword>
<keyword id="KW-1185">Reference proteome</keyword>
<keyword id="KW-0808">Transferase</keyword>
<evidence type="ECO:0000255" key="1">
    <source>
        <dbReference type="HAMAP-Rule" id="MF_02119"/>
    </source>
</evidence>
<evidence type="ECO:0000255" key="2">
    <source>
        <dbReference type="PROSITE-ProRule" id="PRU01067"/>
    </source>
</evidence>
<evidence type="ECO:0000305" key="3"/>
<comment type="function">
    <text evidence="1">Catalyzes the amidotransfer (transamidation) of the octanoyl moiety from octanoyl-GcvH to the lipoyl domain of the E2 subunit of lipoate-dependent enzymes.</text>
</comment>
<comment type="catalytic activity">
    <reaction evidence="1">
        <text>N(6)-octanoyl-L-lysyl-[glycine-cleavage complex H protein] + L-lysyl-[lipoyl-carrier protein] = N(6)-octanoyl-L-lysyl-[lipoyl-carrier protein] + L-lysyl-[glycine-cleavage complex H protein]</text>
        <dbReference type="Rhea" id="RHEA:20213"/>
        <dbReference type="Rhea" id="RHEA-COMP:10500"/>
        <dbReference type="Rhea" id="RHEA-COMP:10501"/>
        <dbReference type="Rhea" id="RHEA-COMP:10503"/>
        <dbReference type="Rhea" id="RHEA-COMP:10504"/>
        <dbReference type="ChEBI" id="CHEBI:29969"/>
        <dbReference type="ChEBI" id="CHEBI:78809"/>
        <dbReference type="EC" id="2.3.1.204"/>
    </reaction>
</comment>
<comment type="pathway">
    <text evidence="1">Protein modification; protein lipoylation via endogenous pathway; protein N(6)-(lipoyl)lysine from octanoyl-[acyl-carrier-protein].</text>
</comment>
<comment type="miscellaneous">
    <text evidence="1">The reaction proceeds via a thioester-linked acyl-enzyme intermediate.</text>
</comment>
<comment type="similarity">
    <text evidence="1">Belongs to the octanoyltransferase LipL family.</text>
</comment>
<comment type="sequence caution" evidence="3">
    <conflict type="erroneous initiation">
        <sequence resource="EMBL-CDS" id="ABD29718"/>
    </conflict>
    <text>Truncated N-terminus.</text>
</comment>
<organism>
    <name type="scientific">Staphylococcus aureus (strain NCTC 8325 / PS 47)</name>
    <dbReference type="NCBI Taxonomy" id="93061"/>
    <lineage>
        <taxon>Bacteria</taxon>
        <taxon>Bacillati</taxon>
        <taxon>Bacillota</taxon>
        <taxon>Bacilli</taxon>
        <taxon>Bacillales</taxon>
        <taxon>Staphylococcaceae</taxon>
        <taxon>Staphylococcus</taxon>
    </lineage>
</organism>
<protein>
    <recommendedName>
        <fullName evidence="1">Octanoyl-[GcvH]:protein N-octanoyltransferase</fullName>
        <ecNumber evidence="1">2.3.1.204</ecNumber>
    </recommendedName>
    <alternativeName>
        <fullName evidence="1">Octanoyl-[GcvH]:E2 amidotransferase</fullName>
    </alternativeName>
</protein>
<reference key="1">
    <citation type="book" date="2006" name="Gram positive pathogens, 2nd edition">
        <title>The Staphylococcus aureus NCTC 8325 genome.</title>
        <editorList>
            <person name="Fischetti V."/>
            <person name="Novick R."/>
            <person name="Ferretti J."/>
            <person name="Portnoy D."/>
            <person name="Rood J."/>
        </editorList>
        <authorList>
            <person name="Gillaspy A.F."/>
            <person name="Worrell V."/>
            <person name="Orvis J."/>
            <person name="Roe B.A."/>
            <person name="Dyer D.W."/>
            <person name="Iandolo J.J."/>
        </authorList>
    </citation>
    <scope>NUCLEOTIDE SEQUENCE [LARGE SCALE GENOMIC DNA]</scope>
    <source>
        <strain>NCTC 8325 / PS 47</strain>
    </source>
</reference>
<gene>
    <name evidence="1" type="primary">lipL</name>
    <name type="ordered locus">SAOUHSC_00575</name>
</gene>
<name>LIPL_STAA8</name>
<sequence>MDLASKYFNGVNWRYIDHSSGLEPMQSFAFDDTFCESVGKDISDNVVRTWIHQHTVILGIHDSRLPFLKDGIDYLTNEIGYNAIVRNSGGLGVVLDQGVLNISLMFKGQTETTIDEAFTVMYLLISKMFENENVDIDTMEIEHSYCPGKFDLSIDGKKFAGISQRRVRGGIAVQIYLCVEGSGSERALMMQTFYEHALKGEVTKFKYPEIEPSCMASLETLLNKTITVQDVMFLLLYAIKDLGGVLNMTPITQEEWQRYDTYFDKMIERNKKMIDQMQ</sequence>